<sequence length="461" mass="52229">MATATTQRPLKGPAKRMSTWTMTREAITIGFDAGDGFLGRLRGSDITRFRCAGRRFVSISHPDYVDHVLHEARLKYVKSDEYGPIRATAGLNLLTDEGDSWARHRGALNSTFARRHLRGLVGLMIDPIADVTAARVPGAQFDMHQSMVETTLRVVANALFSQDFGPLVQSMHDLATRGLRRAEKLERLGLWGLMPRTVYDTLIWCIYSGVHLPPPLREMQEITLTLDRAINSVIDRRLAEPTNSADLLNVLLSADGGIWPRQRVRDEALTFMLAGHETTANAMSWFWYLMALNPQARDHMLTELDDVLGMRRPTADDLGKLAWTTACLQESQRYFSSVWIIAREAVDDDIIDGHRIRRGTTVVIPIHHIHHDPRWWPDPDRFDPGRFLRCPTDRPRCAYLPFGGGRRICIGQSFALMEMVLMAAIMSQHFTFDLAPGYHVELEATLTLRPKHGVHVIGRRR</sequence>
<name>CP132_MYCTU</name>
<proteinExistence type="evidence at protein level"/>
<feature type="chain" id="PRO_0000052287" description="Putative cytochrome P450 132">
    <location>
        <begin position="1"/>
        <end position="461"/>
    </location>
</feature>
<feature type="binding site" description="axial binding residue" evidence="1">
    <location>
        <position position="409"/>
    </location>
    <ligand>
        <name>heme</name>
        <dbReference type="ChEBI" id="CHEBI:30413"/>
    </ligand>
    <ligandPart>
        <name>Fe</name>
        <dbReference type="ChEBI" id="CHEBI:18248"/>
    </ligandPart>
</feature>
<comment type="cofactor">
    <cofactor evidence="1">
        <name>heme</name>
        <dbReference type="ChEBI" id="CHEBI:30413"/>
    </cofactor>
</comment>
<comment type="similarity">
    <text evidence="2">Belongs to the cytochrome P450 family.</text>
</comment>
<protein>
    <recommendedName>
        <fullName>Putative cytochrome P450 132</fullName>
        <ecNumber>1.14.-.-</ecNumber>
    </recommendedName>
</protein>
<keyword id="KW-0349">Heme</keyword>
<keyword id="KW-0408">Iron</keyword>
<keyword id="KW-0479">Metal-binding</keyword>
<keyword id="KW-0503">Monooxygenase</keyword>
<keyword id="KW-0560">Oxidoreductase</keyword>
<keyword id="KW-1185">Reference proteome</keyword>
<gene>
    <name type="primary">cyp132</name>
    <name type="ordered locus">Rv1394c</name>
    <name type="ORF">MTCY21B4.11c</name>
</gene>
<reference key="1">
    <citation type="journal article" date="1998" name="Nature">
        <title>Deciphering the biology of Mycobacterium tuberculosis from the complete genome sequence.</title>
        <authorList>
            <person name="Cole S.T."/>
            <person name="Brosch R."/>
            <person name="Parkhill J."/>
            <person name="Garnier T."/>
            <person name="Churcher C.M."/>
            <person name="Harris D.E."/>
            <person name="Gordon S.V."/>
            <person name="Eiglmeier K."/>
            <person name="Gas S."/>
            <person name="Barry C.E. III"/>
            <person name="Tekaia F."/>
            <person name="Badcock K."/>
            <person name="Basham D."/>
            <person name="Brown D."/>
            <person name="Chillingworth T."/>
            <person name="Connor R."/>
            <person name="Davies R.M."/>
            <person name="Devlin K."/>
            <person name="Feltwell T."/>
            <person name="Gentles S."/>
            <person name="Hamlin N."/>
            <person name="Holroyd S."/>
            <person name="Hornsby T."/>
            <person name="Jagels K."/>
            <person name="Krogh A."/>
            <person name="McLean J."/>
            <person name="Moule S."/>
            <person name="Murphy L.D."/>
            <person name="Oliver S."/>
            <person name="Osborne J."/>
            <person name="Quail M.A."/>
            <person name="Rajandream M.A."/>
            <person name="Rogers J."/>
            <person name="Rutter S."/>
            <person name="Seeger K."/>
            <person name="Skelton S."/>
            <person name="Squares S."/>
            <person name="Squares R."/>
            <person name="Sulston J.E."/>
            <person name="Taylor K."/>
            <person name="Whitehead S."/>
            <person name="Barrell B.G."/>
        </authorList>
    </citation>
    <scope>NUCLEOTIDE SEQUENCE [LARGE SCALE GENOMIC DNA]</scope>
    <source>
        <strain>ATCC 25618 / H37Rv</strain>
    </source>
</reference>
<reference key="2">
    <citation type="journal article" date="2011" name="Mol. Cell. Proteomics">
        <title>Proteogenomic analysis of Mycobacterium tuberculosis by high resolution mass spectrometry.</title>
        <authorList>
            <person name="Kelkar D.S."/>
            <person name="Kumar D."/>
            <person name="Kumar P."/>
            <person name="Balakrishnan L."/>
            <person name="Muthusamy B."/>
            <person name="Yadav A.K."/>
            <person name="Shrivastava P."/>
            <person name="Marimuthu A."/>
            <person name="Anand S."/>
            <person name="Sundaram H."/>
            <person name="Kingsbury R."/>
            <person name="Harsha H.C."/>
            <person name="Nair B."/>
            <person name="Prasad T.S."/>
            <person name="Chauhan D.S."/>
            <person name="Katoch K."/>
            <person name="Katoch V.M."/>
            <person name="Kumar P."/>
            <person name="Chaerkady R."/>
            <person name="Ramachandran S."/>
            <person name="Dash D."/>
            <person name="Pandey A."/>
        </authorList>
    </citation>
    <scope>IDENTIFICATION BY MASS SPECTROMETRY [LARGE SCALE ANALYSIS]</scope>
    <source>
        <strain>ATCC 25618 / H37Rv</strain>
    </source>
</reference>
<accession>P9WPN3</accession>
<accession>L0T9I0</accession>
<accession>P77900</accession>
<evidence type="ECO:0000250" key="1"/>
<evidence type="ECO:0000305" key="2"/>
<organism>
    <name type="scientific">Mycobacterium tuberculosis (strain ATCC 25618 / H37Rv)</name>
    <dbReference type="NCBI Taxonomy" id="83332"/>
    <lineage>
        <taxon>Bacteria</taxon>
        <taxon>Bacillati</taxon>
        <taxon>Actinomycetota</taxon>
        <taxon>Actinomycetes</taxon>
        <taxon>Mycobacteriales</taxon>
        <taxon>Mycobacteriaceae</taxon>
        <taxon>Mycobacterium</taxon>
        <taxon>Mycobacterium tuberculosis complex</taxon>
    </lineage>
</organism>
<dbReference type="EC" id="1.14.-.-"/>
<dbReference type="EMBL" id="AL123456">
    <property type="protein sequence ID" value="CCP44153.1"/>
    <property type="molecule type" value="Genomic_DNA"/>
</dbReference>
<dbReference type="PIR" id="H70899">
    <property type="entry name" value="H70899"/>
</dbReference>
<dbReference type="RefSeq" id="WP_003911514.1">
    <property type="nucleotide sequence ID" value="NZ_NVQJ01000050.1"/>
</dbReference>
<dbReference type="RefSeq" id="YP_177807.1">
    <property type="nucleotide sequence ID" value="NC_000962.3"/>
</dbReference>
<dbReference type="SMR" id="P9WPN3"/>
<dbReference type="FunCoup" id="P9WPN3">
    <property type="interactions" value="148"/>
</dbReference>
<dbReference type="STRING" id="83332.Rv1394c"/>
<dbReference type="PaxDb" id="83332-Rv1394c"/>
<dbReference type="DNASU" id="886738"/>
<dbReference type="GeneID" id="886738"/>
<dbReference type="KEGG" id="mtu:Rv1394c"/>
<dbReference type="KEGG" id="mtv:RVBD_1394c"/>
<dbReference type="TubercuList" id="Rv1394c"/>
<dbReference type="eggNOG" id="COG2124">
    <property type="taxonomic scope" value="Bacteria"/>
</dbReference>
<dbReference type="InParanoid" id="P9WPN3"/>
<dbReference type="OrthoDB" id="7376058at2"/>
<dbReference type="PhylomeDB" id="P9WPN3"/>
<dbReference type="Proteomes" id="UP000001584">
    <property type="component" value="Chromosome"/>
</dbReference>
<dbReference type="GO" id="GO:0020037">
    <property type="term" value="F:heme binding"/>
    <property type="evidence" value="ECO:0007669"/>
    <property type="project" value="InterPro"/>
</dbReference>
<dbReference type="GO" id="GO:0005506">
    <property type="term" value="F:iron ion binding"/>
    <property type="evidence" value="ECO:0007669"/>
    <property type="project" value="InterPro"/>
</dbReference>
<dbReference type="GO" id="GO:0004497">
    <property type="term" value="F:monooxygenase activity"/>
    <property type="evidence" value="ECO:0000318"/>
    <property type="project" value="GO_Central"/>
</dbReference>
<dbReference type="GO" id="GO:0016705">
    <property type="term" value="F:oxidoreductase activity, acting on paired donors, with incorporation or reduction of molecular oxygen"/>
    <property type="evidence" value="ECO:0007669"/>
    <property type="project" value="InterPro"/>
</dbReference>
<dbReference type="CDD" id="cd20620">
    <property type="entry name" value="CYP132-like"/>
    <property type="match status" value="1"/>
</dbReference>
<dbReference type="Gene3D" id="1.10.630.10">
    <property type="entry name" value="Cytochrome P450"/>
    <property type="match status" value="1"/>
</dbReference>
<dbReference type="InterPro" id="IPR001128">
    <property type="entry name" value="Cyt_P450"/>
</dbReference>
<dbReference type="InterPro" id="IPR017972">
    <property type="entry name" value="Cyt_P450_CS"/>
</dbReference>
<dbReference type="InterPro" id="IPR002401">
    <property type="entry name" value="Cyt_P450_E_grp-I"/>
</dbReference>
<dbReference type="InterPro" id="IPR036396">
    <property type="entry name" value="Cyt_P450_sf"/>
</dbReference>
<dbReference type="InterPro" id="IPR050196">
    <property type="entry name" value="Cytochrome_P450_Monoox"/>
</dbReference>
<dbReference type="PANTHER" id="PTHR24291:SF50">
    <property type="entry name" value="BIFUNCTIONAL ALBAFLAVENONE MONOOXYGENASE_TERPENE SYNTHASE"/>
    <property type="match status" value="1"/>
</dbReference>
<dbReference type="PANTHER" id="PTHR24291">
    <property type="entry name" value="CYTOCHROME P450 FAMILY 4"/>
    <property type="match status" value="1"/>
</dbReference>
<dbReference type="Pfam" id="PF00067">
    <property type="entry name" value="p450"/>
    <property type="match status" value="1"/>
</dbReference>
<dbReference type="PRINTS" id="PR00463">
    <property type="entry name" value="EP450I"/>
</dbReference>
<dbReference type="PRINTS" id="PR00385">
    <property type="entry name" value="P450"/>
</dbReference>
<dbReference type="SUPFAM" id="SSF48264">
    <property type="entry name" value="Cytochrome P450"/>
    <property type="match status" value="1"/>
</dbReference>
<dbReference type="PROSITE" id="PS00086">
    <property type="entry name" value="CYTOCHROME_P450"/>
    <property type="match status" value="1"/>
</dbReference>